<proteinExistence type="inferred from homology"/>
<sequence length="191" mass="21323">MRLIIMGPPGAGKGTQAKYIAEHFKIPAISTGDIFRANVTEGTPLGVEAKRYMDAGEYVPDEVTNRMVRNRIDEPDAVGGFLLDGYPRTVAQVEELDGMIRFTGHRLDAVVCLTVDQDEIVGRLLQRAQVEGRADDTEDVIRRRQDLYLEQTAPLIEIYKQRDLVHEVDGIGEVDEVTARIFQALDVIPES</sequence>
<feature type="chain" id="PRO_1000058867" description="Adenylate kinase">
    <location>
        <begin position="1"/>
        <end position="191"/>
    </location>
</feature>
<feature type="region of interest" description="NMP" evidence="1">
    <location>
        <begin position="30"/>
        <end position="59"/>
    </location>
</feature>
<feature type="region of interest" description="LID" evidence="1">
    <location>
        <begin position="126"/>
        <end position="136"/>
    </location>
</feature>
<feature type="binding site" evidence="1">
    <location>
        <begin position="10"/>
        <end position="15"/>
    </location>
    <ligand>
        <name>ATP</name>
        <dbReference type="ChEBI" id="CHEBI:30616"/>
    </ligand>
</feature>
<feature type="binding site" evidence="1">
    <location>
        <position position="31"/>
    </location>
    <ligand>
        <name>AMP</name>
        <dbReference type="ChEBI" id="CHEBI:456215"/>
    </ligand>
</feature>
<feature type="binding site" evidence="1">
    <location>
        <position position="36"/>
    </location>
    <ligand>
        <name>AMP</name>
        <dbReference type="ChEBI" id="CHEBI:456215"/>
    </ligand>
</feature>
<feature type="binding site" evidence="1">
    <location>
        <begin position="57"/>
        <end position="59"/>
    </location>
    <ligand>
        <name>AMP</name>
        <dbReference type="ChEBI" id="CHEBI:456215"/>
    </ligand>
</feature>
<feature type="binding site" evidence="1">
    <location>
        <begin position="85"/>
        <end position="88"/>
    </location>
    <ligand>
        <name>AMP</name>
        <dbReference type="ChEBI" id="CHEBI:456215"/>
    </ligand>
</feature>
<feature type="binding site" evidence="1">
    <location>
        <position position="92"/>
    </location>
    <ligand>
        <name>AMP</name>
        <dbReference type="ChEBI" id="CHEBI:456215"/>
    </ligand>
</feature>
<feature type="binding site" evidence="1">
    <location>
        <position position="127"/>
    </location>
    <ligand>
        <name>ATP</name>
        <dbReference type="ChEBI" id="CHEBI:30616"/>
    </ligand>
</feature>
<feature type="binding site" evidence="1">
    <location>
        <position position="133"/>
    </location>
    <ligand>
        <name>AMP</name>
        <dbReference type="ChEBI" id="CHEBI:456215"/>
    </ligand>
</feature>
<feature type="binding site" evidence="1">
    <location>
        <position position="144"/>
    </location>
    <ligand>
        <name>AMP</name>
        <dbReference type="ChEBI" id="CHEBI:456215"/>
    </ligand>
</feature>
<feature type="binding site" evidence="1">
    <location>
        <position position="172"/>
    </location>
    <ligand>
        <name>ATP</name>
        <dbReference type="ChEBI" id="CHEBI:30616"/>
    </ligand>
</feature>
<protein>
    <recommendedName>
        <fullName evidence="1">Adenylate kinase</fullName>
        <shortName evidence="1">AK</shortName>
        <ecNumber evidence="1">2.7.4.3</ecNumber>
    </recommendedName>
    <alternativeName>
        <fullName evidence="1">ATP-AMP transphosphorylase</fullName>
    </alternativeName>
    <alternativeName>
        <fullName evidence="1">ATP:AMP phosphotransferase</fullName>
    </alternativeName>
    <alternativeName>
        <fullName evidence="1">Adenylate monophosphate kinase</fullName>
    </alternativeName>
</protein>
<organism>
    <name type="scientific">Nocardioides sp. (strain ATCC BAA-499 / JS614)</name>
    <dbReference type="NCBI Taxonomy" id="196162"/>
    <lineage>
        <taxon>Bacteria</taxon>
        <taxon>Bacillati</taxon>
        <taxon>Actinomycetota</taxon>
        <taxon>Actinomycetes</taxon>
        <taxon>Propionibacteriales</taxon>
        <taxon>Nocardioidaceae</taxon>
        <taxon>Nocardioides</taxon>
    </lineage>
</organism>
<comment type="function">
    <text evidence="1">Catalyzes the reversible transfer of the terminal phosphate group between ATP and AMP. Plays an important role in cellular energy homeostasis and in adenine nucleotide metabolism.</text>
</comment>
<comment type="catalytic activity">
    <reaction evidence="1">
        <text>AMP + ATP = 2 ADP</text>
        <dbReference type="Rhea" id="RHEA:12973"/>
        <dbReference type="ChEBI" id="CHEBI:30616"/>
        <dbReference type="ChEBI" id="CHEBI:456215"/>
        <dbReference type="ChEBI" id="CHEBI:456216"/>
        <dbReference type="EC" id="2.7.4.3"/>
    </reaction>
</comment>
<comment type="pathway">
    <text evidence="1">Purine metabolism; AMP biosynthesis via salvage pathway; AMP from ADP: step 1/1.</text>
</comment>
<comment type="subunit">
    <text evidence="1">Monomer.</text>
</comment>
<comment type="subcellular location">
    <subcellularLocation>
        <location evidence="1">Cytoplasm</location>
    </subcellularLocation>
</comment>
<comment type="domain">
    <text evidence="1">Consists of three domains, a large central CORE domain and two small peripheral domains, NMPbind and LID, which undergo movements during catalysis. The LID domain closes over the site of phosphoryl transfer upon ATP binding. Assembling and dissambling the active center during each catalytic cycle provides an effective means to prevent ATP hydrolysis.</text>
</comment>
<comment type="similarity">
    <text evidence="1">Belongs to the adenylate kinase family.</text>
</comment>
<gene>
    <name evidence="1" type="primary">adk</name>
    <name type="ordered locus">Noca_3884</name>
</gene>
<accession>A1SNJ7</accession>
<evidence type="ECO:0000255" key="1">
    <source>
        <dbReference type="HAMAP-Rule" id="MF_00235"/>
    </source>
</evidence>
<name>KAD_NOCSJ</name>
<keyword id="KW-0067">ATP-binding</keyword>
<keyword id="KW-0963">Cytoplasm</keyword>
<keyword id="KW-0418">Kinase</keyword>
<keyword id="KW-0545">Nucleotide biosynthesis</keyword>
<keyword id="KW-0547">Nucleotide-binding</keyword>
<keyword id="KW-1185">Reference proteome</keyword>
<keyword id="KW-0808">Transferase</keyword>
<dbReference type="EC" id="2.7.4.3" evidence="1"/>
<dbReference type="EMBL" id="CP000509">
    <property type="protein sequence ID" value="ABL83382.1"/>
    <property type="molecule type" value="Genomic_DNA"/>
</dbReference>
<dbReference type="RefSeq" id="WP_011757313.1">
    <property type="nucleotide sequence ID" value="NC_008699.1"/>
</dbReference>
<dbReference type="SMR" id="A1SNJ7"/>
<dbReference type="STRING" id="196162.Noca_3884"/>
<dbReference type="KEGG" id="nca:Noca_3884"/>
<dbReference type="eggNOG" id="COG0563">
    <property type="taxonomic scope" value="Bacteria"/>
</dbReference>
<dbReference type="HOGENOM" id="CLU_032354_1_2_11"/>
<dbReference type="OrthoDB" id="9805030at2"/>
<dbReference type="UniPathway" id="UPA00588">
    <property type="reaction ID" value="UER00649"/>
</dbReference>
<dbReference type="Proteomes" id="UP000000640">
    <property type="component" value="Chromosome"/>
</dbReference>
<dbReference type="GO" id="GO:0005737">
    <property type="term" value="C:cytoplasm"/>
    <property type="evidence" value="ECO:0007669"/>
    <property type="project" value="UniProtKB-SubCell"/>
</dbReference>
<dbReference type="GO" id="GO:0004017">
    <property type="term" value="F:adenylate kinase activity"/>
    <property type="evidence" value="ECO:0007669"/>
    <property type="project" value="UniProtKB-UniRule"/>
</dbReference>
<dbReference type="GO" id="GO:0005524">
    <property type="term" value="F:ATP binding"/>
    <property type="evidence" value="ECO:0007669"/>
    <property type="project" value="UniProtKB-UniRule"/>
</dbReference>
<dbReference type="GO" id="GO:0044209">
    <property type="term" value="P:AMP salvage"/>
    <property type="evidence" value="ECO:0007669"/>
    <property type="project" value="UniProtKB-UniRule"/>
</dbReference>
<dbReference type="CDD" id="cd01428">
    <property type="entry name" value="ADK"/>
    <property type="match status" value="1"/>
</dbReference>
<dbReference type="Gene3D" id="3.40.50.300">
    <property type="entry name" value="P-loop containing nucleotide triphosphate hydrolases"/>
    <property type="match status" value="1"/>
</dbReference>
<dbReference type="HAMAP" id="MF_00235">
    <property type="entry name" value="Adenylate_kinase_Adk"/>
    <property type="match status" value="1"/>
</dbReference>
<dbReference type="InterPro" id="IPR000850">
    <property type="entry name" value="Adenylat/UMP-CMP_kin"/>
</dbReference>
<dbReference type="InterPro" id="IPR033690">
    <property type="entry name" value="Adenylat_kinase_CS"/>
</dbReference>
<dbReference type="InterPro" id="IPR027417">
    <property type="entry name" value="P-loop_NTPase"/>
</dbReference>
<dbReference type="NCBIfam" id="NF001381">
    <property type="entry name" value="PRK00279.1-3"/>
    <property type="match status" value="1"/>
</dbReference>
<dbReference type="NCBIfam" id="NF011100">
    <property type="entry name" value="PRK14527.1"/>
    <property type="match status" value="1"/>
</dbReference>
<dbReference type="NCBIfam" id="NF011101">
    <property type="entry name" value="PRK14528.1"/>
    <property type="match status" value="1"/>
</dbReference>
<dbReference type="NCBIfam" id="NF011104">
    <property type="entry name" value="PRK14531.1"/>
    <property type="match status" value="1"/>
</dbReference>
<dbReference type="NCBIfam" id="NF011105">
    <property type="entry name" value="PRK14532.1"/>
    <property type="match status" value="1"/>
</dbReference>
<dbReference type="PANTHER" id="PTHR23359">
    <property type="entry name" value="NUCLEOTIDE KINASE"/>
    <property type="match status" value="1"/>
</dbReference>
<dbReference type="Pfam" id="PF00406">
    <property type="entry name" value="ADK"/>
    <property type="match status" value="1"/>
</dbReference>
<dbReference type="PRINTS" id="PR00094">
    <property type="entry name" value="ADENYLTKNASE"/>
</dbReference>
<dbReference type="SUPFAM" id="SSF52540">
    <property type="entry name" value="P-loop containing nucleoside triphosphate hydrolases"/>
    <property type="match status" value="1"/>
</dbReference>
<dbReference type="PROSITE" id="PS00113">
    <property type="entry name" value="ADENYLATE_KINASE"/>
    <property type="match status" value="1"/>
</dbReference>
<reference key="1">
    <citation type="submission" date="2006-12" db="EMBL/GenBank/DDBJ databases">
        <title>Complete sequence of chromosome 1 of Nocardioides sp. JS614.</title>
        <authorList>
            <person name="Copeland A."/>
            <person name="Lucas S."/>
            <person name="Lapidus A."/>
            <person name="Barry K."/>
            <person name="Detter J.C."/>
            <person name="Glavina del Rio T."/>
            <person name="Hammon N."/>
            <person name="Israni S."/>
            <person name="Dalin E."/>
            <person name="Tice H."/>
            <person name="Pitluck S."/>
            <person name="Thompson L.S."/>
            <person name="Brettin T."/>
            <person name="Bruce D."/>
            <person name="Han C."/>
            <person name="Tapia R."/>
            <person name="Schmutz J."/>
            <person name="Larimer F."/>
            <person name="Land M."/>
            <person name="Hauser L."/>
            <person name="Kyrpides N."/>
            <person name="Kim E."/>
            <person name="Mattes T."/>
            <person name="Gossett J."/>
            <person name="Richardson P."/>
        </authorList>
    </citation>
    <scope>NUCLEOTIDE SEQUENCE [LARGE SCALE GENOMIC DNA]</scope>
    <source>
        <strain>ATCC BAA-499 / JS614</strain>
    </source>
</reference>